<feature type="transit peptide" description="Mitochondrion">
    <location>
        <begin position="1"/>
        <end position="66"/>
    </location>
</feature>
<feature type="chain" id="PRO_0000002566" description="ATP synthase F(0) complex subunit C2, mitochondrial">
    <location>
        <begin position="67"/>
        <end position="141"/>
    </location>
</feature>
<feature type="transmembrane region" description="Helical" evidence="3">
    <location>
        <begin position="82"/>
        <end position="102"/>
    </location>
</feature>
<feature type="transmembrane region" description="Helical" evidence="3">
    <location>
        <begin position="117"/>
        <end position="137"/>
    </location>
</feature>
<feature type="site" description="Reversibly protonated during proton transport" evidence="1">
    <location>
        <position position="124"/>
    </location>
</feature>
<feature type="modified residue" description="N6,N6,N6-trimethyllysine" evidence="4">
    <location>
        <position position="109"/>
    </location>
</feature>
<reference key="1">
    <citation type="journal article" date="1993" name="Biochim. Biophys. Acta">
        <title>Molecular cloning and sequence of cDNAs for the import precursors of oligomycin sensitivity conferring protein, ATPase inhibitor protein, and subunit c of H(+)-ATP synthase in rat mitochondria.</title>
        <authorList>
            <person name="Higuti T."/>
            <person name="Kuroiwa K."/>
            <person name="Kawamura Y."/>
            <person name="Morimoto K."/>
            <person name="Tsujita H."/>
        </authorList>
    </citation>
    <scope>NUCLEOTIDE SEQUENCE [MRNA]</scope>
</reference>
<reference key="2">
    <citation type="journal article" date="2004" name="Genome Res.">
        <title>The status, quality, and expansion of the NIH full-length cDNA project: the Mammalian Gene Collection (MGC).</title>
        <authorList>
            <consortium name="The MGC Project Team"/>
        </authorList>
    </citation>
    <scope>NUCLEOTIDE SEQUENCE [LARGE SCALE MRNA]</scope>
    <source>
        <tissue>Liver</tissue>
    </source>
</reference>
<reference key="3">
    <citation type="journal article" date="2019" name="J. Biol. Chem.">
        <title>Lysine methylation by the mitochondrial methyltransferase FAM173B optimizes the function of mitochondrial ATP synthase.</title>
        <authorList>
            <person name="Malecki J.M."/>
            <person name="Willemen H.L.D.M."/>
            <person name="Pinto R."/>
            <person name="Ho A.Y.Y."/>
            <person name="Moen A."/>
            <person name="Kjoenstad I.F."/>
            <person name="Burgering B.M.T."/>
            <person name="Zwartkruis F."/>
            <person name="Eijkelkamp N."/>
            <person name="Falnes P.O."/>
        </authorList>
    </citation>
    <scope>METHYLATION AT LYS-109</scope>
</reference>
<evidence type="ECO:0000250" key="1"/>
<evidence type="ECO:0000250" key="2">
    <source>
        <dbReference type="UniProtKB" id="Q06055"/>
    </source>
</evidence>
<evidence type="ECO:0000255" key="3"/>
<evidence type="ECO:0000269" key="4">
    <source>
    </source>
</evidence>
<evidence type="ECO:0000305" key="5"/>
<evidence type="ECO:0000312" key="6">
    <source>
        <dbReference type="RGD" id="620051"/>
    </source>
</evidence>
<comment type="function">
    <text>Mitochondrial membrane ATP synthase (F(1)F(0) ATP synthase or Complex V) produces ATP from ADP in the presence of a proton gradient across the membrane which is generated by electron transport complexes of the respiratory chain. F-type ATPases consist of two structural domains, F(1) - containing the extramembraneous catalytic core and F(0) - containing the membrane proton channel, linked together by a central stalk and a peripheral stalk. During catalysis, ATP synthesis in the catalytic domain of F(1) is coupled via a rotary mechanism of the central stalk subunits to proton translocation. Part of the complex F(0) domain. A homomeric c-ring of probably 10 subunits is part of the complex rotary element.</text>
</comment>
<comment type="subunit">
    <text evidence="2">F-type ATPases have 2 components, CF(1) - the catalytic core - and CF(0) - the membrane proton channel. CF(1) has five subunits: alpha(3), beta(3), gamma(1), delta(1), epsilon(1). CF(0) has three main subunits: a, b and c. Interacts with DNAJC30; interaction is direct.</text>
</comment>
<comment type="subcellular location">
    <subcellularLocation>
        <location>Mitochondrion membrane</location>
        <topology>Multi-pass membrane protein</topology>
    </subcellularLocation>
</comment>
<comment type="PTM">
    <text evidence="4">Trimethylated by ATPSCKMT at Lys-109. Methylation is required for proper incorporation of the C subunit into the ATP synthase complex and mitochondrial respiration.</text>
</comment>
<comment type="disease">
    <text>This protein is the major protein stored in the storage bodies of animals or humans affected with ceroid lipofuscinosis (Batten disease).</text>
</comment>
<comment type="miscellaneous">
    <text>There are three genes which encode the mitochondrial ATP synthase proteolipid and they specify precursors with different import sequences. They are expressed in a tissue-specific manner.</text>
</comment>
<comment type="similarity">
    <text evidence="5">Belongs to the ATPase C chain family.</text>
</comment>
<name>AT5G2_RAT</name>
<keyword id="KW-0138">CF(0)</keyword>
<keyword id="KW-0375">Hydrogen ion transport</keyword>
<keyword id="KW-0406">Ion transport</keyword>
<keyword id="KW-0446">Lipid-binding</keyword>
<keyword id="KW-0472">Membrane</keyword>
<keyword id="KW-0488">Methylation</keyword>
<keyword id="KW-0496">Mitochondrion</keyword>
<keyword id="KW-1185">Reference proteome</keyword>
<keyword id="KW-0809">Transit peptide</keyword>
<keyword id="KW-0812">Transmembrane</keyword>
<keyword id="KW-1133">Transmembrane helix</keyword>
<keyword id="KW-0813">Transport</keyword>
<dbReference type="EMBL" id="D13124">
    <property type="protein sequence ID" value="BAA02426.1"/>
    <property type="molecule type" value="mRNA"/>
</dbReference>
<dbReference type="EMBL" id="BC128726">
    <property type="protein sequence ID" value="AAI28727.1"/>
    <property type="molecule type" value="mRNA"/>
</dbReference>
<dbReference type="PIR" id="JS0741">
    <property type="entry name" value="JS0741"/>
</dbReference>
<dbReference type="RefSeq" id="NP_598240.1">
    <property type="nucleotide sequence ID" value="NM_133556.2"/>
</dbReference>
<dbReference type="RefSeq" id="XP_038934273.1">
    <property type="nucleotide sequence ID" value="XM_039078345.2"/>
</dbReference>
<dbReference type="RefSeq" id="XP_063119018.1">
    <property type="nucleotide sequence ID" value="XM_063262948.1"/>
</dbReference>
<dbReference type="SMR" id="Q06646"/>
<dbReference type="BioGRID" id="251094">
    <property type="interactions" value="3"/>
</dbReference>
<dbReference type="CORUM" id="Q06646"/>
<dbReference type="FunCoup" id="Q06646">
    <property type="interactions" value="955"/>
</dbReference>
<dbReference type="STRING" id="10116.ENSRNOP00000068783"/>
<dbReference type="PhosphoSitePlus" id="Q06646"/>
<dbReference type="jPOST" id="Q06646"/>
<dbReference type="PaxDb" id="10116-ENSRNOP00000020675"/>
<dbReference type="Ensembl" id="ENSRNOT00000020676.7">
    <property type="protein sequence ID" value="ENSRNOP00000020675.3"/>
    <property type="gene ID" value="ENSRNOG00000015320.8"/>
</dbReference>
<dbReference type="GeneID" id="171082"/>
<dbReference type="KEGG" id="rno:171082"/>
<dbReference type="UCSC" id="RGD:620051">
    <property type="organism name" value="rat"/>
</dbReference>
<dbReference type="AGR" id="RGD:620051"/>
<dbReference type="CTD" id="517"/>
<dbReference type="RGD" id="620051">
    <property type="gene designation" value="Atp5mc2"/>
</dbReference>
<dbReference type="eggNOG" id="KOG3025">
    <property type="taxonomic scope" value="Eukaryota"/>
</dbReference>
<dbReference type="GeneTree" id="ENSGT00940000157455"/>
<dbReference type="InParanoid" id="Q06646"/>
<dbReference type="OMA" id="MYTCSRF"/>
<dbReference type="OrthoDB" id="76944at9989"/>
<dbReference type="Reactome" id="R-RNO-163210">
    <property type="pathway name" value="Formation of ATP by chemiosmotic coupling"/>
</dbReference>
<dbReference type="Reactome" id="R-RNO-8949613">
    <property type="pathway name" value="Cristae formation"/>
</dbReference>
<dbReference type="PRO" id="PR:Q06646"/>
<dbReference type="Proteomes" id="UP000002494">
    <property type="component" value="Chromosome 7"/>
</dbReference>
<dbReference type="Bgee" id="ENSRNOG00000015320">
    <property type="expression patterns" value="Expressed in quadriceps femoris and 19 other cell types or tissues"/>
</dbReference>
<dbReference type="ExpressionAtlas" id="Q06646">
    <property type="expression patterns" value="baseline and differential"/>
</dbReference>
<dbReference type="GO" id="GO:0034703">
    <property type="term" value="C:cation channel complex"/>
    <property type="evidence" value="ECO:0000314"/>
    <property type="project" value="RGD"/>
</dbReference>
<dbReference type="GO" id="GO:0031966">
    <property type="term" value="C:mitochondrial membrane"/>
    <property type="evidence" value="ECO:0007669"/>
    <property type="project" value="UniProtKB-SubCell"/>
</dbReference>
<dbReference type="GO" id="GO:0045259">
    <property type="term" value="C:proton-transporting ATP synthase complex"/>
    <property type="evidence" value="ECO:0007669"/>
    <property type="project" value="UniProtKB-KW"/>
</dbReference>
<dbReference type="GO" id="GO:0033177">
    <property type="term" value="C:proton-transporting two-sector ATPase complex, proton-transporting domain"/>
    <property type="evidence" value="ECO:0007669"/>
    <property type="project" value="InterPro"/>
</dbReference>
<dbReference type="GO" id="GO:0022834">
    <property type="term" value="F:ligand-gated channel activity"/>
    <property type="evidence" value="ECO:0000314"/>
    <property type="project" value="RGD"/>
</dbReference>
<dbReference type="GO" id="GO:0008289">
    <property type="term" value="F:lipid binding"/>
    <property type="evidence" value="ECO:0007669"/>
    <property type="project" value="UniProtKB-KW"/>
</dbReference>
<dbReference type="GO" id="GO:0015078">
    <property type="term" value="F:proton transmembrane transporter activity"/>
    <property type="evidence" value="ECO:0007669"/>
    <property type="project" value="InterPro"/>
</dbReference>
<dbReference type="GO" id="GO:0046931">
    <property type="term" value="P:pore complex assembly"/>
    <property type="evidence" value="ECO:0000314"/>
    <property type="project" value="RGD"/>
</dbReference>
<dbReference type="GO" id="GO:0015986">
    <property type="term" value="P:proton motive force-driven ATP synthesis"/>
    <property type="evidence" value="ECO:0000318"/>
    <property type="project" value="GO_Central"/>
</dbReference>
<dbReference type="GO" id="GO:1905242">
    <property type="term" value="P:response to 3,3',5-triiodo-L-thyronine"/>
    <property type="evidence" value="ECO:0000270"/>
    <property type="project" value="RGD"/>
</dbReference>
<dbReference type="GO" id="GO:0045471">
    <property type="term" value="P:response to ethanol"/>
    <property type="evidence" value="ECO:0000270"/>
    <property type="project" value="RGD"/>
</dbReference>
<dbReference type="CDD" id="cd18182">
    <property type="entry name" value="ATP-synt_Fo_c_ATP5G3"/>
    <property type="match status" value="1"/>
</dbReference>
<dbReference type="FunFam" id="1.20.20.10:FF:000003">
    <property type="entry name" value="Atp synthase f complex subunit mitochondrial"/>
    <property type="match status" value="1"/>
</dbReference>
<dbReference type="Gene3D" id="1.20.20.10">
    <property type="entry name" value="F1F0 ATP synthase subunit C"/>
    <property type="match status" value="1"/>
</dbReference>
<dbReference type="HAMAP" id="MF_01396">
    <property type="entry name" value="ATP_synth_c_bact"/>
    <property type="match status" value="1"/>
</dbReference>
<dbReference type="InterPro" id="IPR000454">
    <property type="entry name" value="ATP_synth_F0_csu"/>
</dbReference>
<dbReference type="InterPro" id="IPR020537">
    <property type="entry name" value="ATP_synth_F0_csu_DDCD_BS"/>
</dbReference>
<dbReference type="InterPro" id="IPR038662">
    <property type="entry name" value="ATP_synth_F0_csu_sf"/>
</dbReference>
<dbReference type="InterPro" id="IPR002379">
    <property type="entry name" value="ATPase_proteolipid_c-like_dom"/>
</dbReference>
<dbReference type="InterPro" id="IPR035921">
    <property type="entry name" value="F/V-ATP_Csub_sf"/>
</dbReference>
<dbReference type="PANTHER" id="PTHR10031:SF59">
    <property type="entry name" value="ATP SYNTHASE F(0) COMPLEX SUBUNIT C3, MITOCHONDRIAL"/>
    <property type="match status" value="1"/>
</dbReference>
<dbReference type="PANTHER" id="PTHR10031">
    <property type="entry name" value="ATP SYNTHASE LIPID-BINDING PROTEIN, MITOCHONDRIAL"/>
    <property type="match status" value="1"/>
</dbReference>
<dbReference type="Pfam" id="PF00137">
    <property type="entry name" value="ATP-synt_C"/>
    <property type="match status" value="1"/>
</dbReference>
<dbReference type="PRINTS" id="PR00124">
    <property type="entry name" value="ATPASEC"/>
</dbReference>
<dbReference type="SUPFAM" id="SSF81333">
    <property type="entry name" value="F1F0 ATP synthase subunit C"/>
    <property type="match status" value="1"/>
</dbReference>
<dbReference type="PROSITE" id="PS00605">
    <property type="entry name" value="ATPASE_C"/>
    <property type="match status" value="1"/>
</dbReference>
<proteinExistence type="evidence at protein level"/>
<sequence>MYACSKFVSTRSLIRSTSQLLSRPLSAVELKRPQMPTDEGLSCLAVRRPLTSLIPSRSFQTSAISRDIDTAAKFIGAGAATVGVAGSGAGIGTVFGSLIIGYARNPSLKQQLFSYAILGFALSEAMGLFCLMVAFLILFAM</sequence>
<protein>
    <recommendedName>
        <fullName evidence="5">ATP synthase F(0) complex subunit C2, mitochondrial</fullName>
    </recommendedName>
    <alternativeName>
        <fullName>ATP synthase lipid-binding protein</fullName>
    </alternativeName>
    <alternativeName>
        <fullName evidence="6">ATP synthase membrane subunit c locus 2</fullName>
    </alternativeName>
    <alternativeName>
        <fullName>ATP synthase proteolipid P2</fullName>
    </alternativeName>
    <alternativeName>
        <fullName>ATPase protein 9</fullName>
    </alternativeName>
    <alternativeName>
        <fullName>ATPase subunit c</fullName>
    </alternativeName>
</protein>
<gene>
    <name evidence="6" type="primary">Atp5mc2</name>
    <name type="synonym">Atp5g2</name>
</gene>
<accession>Q06646</accession>
<accession>A2VCW6</accession>
<organism>
    <name type="scientific">Rattus norvegicus</name>
    <name type="common">Rat</name>
    <dbReference type="NCBI Taxonomy" id="10116"/>
    <lineage>
        <taxon>Eukaryota</taxon>
        <taxon>Metazoa</taxon>
        <taxon>Chordata</taxon>
        <taxon>Craniata</taxon>
        <taxon>Vertebrata</taxon>
        <taxon>Euteleostomi</taxon>
        <taxon>Mammalia</taxon>
        <taxon>Eutheria</taxon>
        <taxon>Euarchontoglires</taxon>
        <taxon>Glires</taxon>
        <taxon>Rodentia</taxon>
        <taxon>Myomorpha</taxon>
        <taxon>Muroidea</taxon>
        <taxon>Muridae</taxon>
        <taxon>Murinae</taxon>
        <taxon>Rattus</taxon>
    </lineage>
</organism>